<accession>C4LA30</accession>
<name>LPXC_TOLAT</name>
<keyword id="KW-0378">Hydrolase</keyword>
<keyword id="KW-0441">Lipid A biosynthesis</keyword>
<keyword id="KW-0444">Lipid biosynthesis</keyword>
<keyword id="KW-0443">Lipid metabolism</keyword>
<keyword id="KW-0479">Metal-binding</keyword>
<keyword id="KW-1185">Reference proteome</keyword>
<keyword id="KW-0862">Zinc</keyword>
<gene>
    <name evidence="1" type="primary">lpxC</name>
    <name type="ordered locus">Tola_0530</name>
</gene>
<proteinExistence type="inferred from homology"/>
<sequence>MIRQRTLKQLVHATGVGLHSGRKVSLTFRPAPVNTGIVYVRTDLQPEVELRADAQFVRDTVLCTALVNEQGVRISTVEHLSAALASLGIDNLYVEVDAPEVPVMDGSAHPFIYLLQSGGIEEQSLPKQFIRIKKKIRVEDGDKWAEFAPYRRGFRMDLQIDFRHPVFDKQNQHLVFDFSGSKFAKEISRARTFGFMKDIEYLHSQNLALGGSLDNAVVLDDYRVLNEEGLRYEDEFVKHKLLDAIGDLYMCNHSILGQFTAYKTGHAINNKLLRALLADAEAWEMVTFEEEAAKSPIAYFGTKLVLA</sequence>
<protein>
    <recommendedName>
        <fullName evidence="1">UDP-3-O-acyl-N-acetylglucosamine deacetylase</fullName>
        <shortName evidence="1">UDP-3-O-acyl-GlcNAc deacetylase</shortName>
        <ecNumber evidence="1">3.5.1.108</ecNumber>
    </recommendedName>
    <alternativeName>
        <fullName evidence="1">UDP-3-O-[R-3-hydroxymyristoyl]-N-acetylglucosamine deacetylase</fullName>
    </alternativeName>
</protein>
<comment type="function">
    <text evidence="1">Catalyzes the hydrolysis of UDP-3-O-myristoyl-N-acetylglucosamine to form UDP-3-O-myristoylglucosamine and acetate, the committed step in lipid A biosynthesis.</text>
</comment>
<comment type="catalytic activity">
    <reaction evidence="1">
        <text>a UDP-3-O-[(3R)-3-hydroxyacyl]-N-acetyl-alpha-D-glucosamine + H2O = a UDP-3-O-[(3R)-3-hydroxyacyl]-alpha-D-glucosamine + acetate</text>
        <dbReference type="Rhea" id="RHEA:67816"/>
        <dbReference type="ChEBI" id="CHEBI:15377"/>
        <dbReference type="ChEBI" id="CHEBI:30089"/>
        <dbReference type="ChEBI" id="CHEBI:137740"/>
        <dbReference type="ChEBI" id="CHEBI:173225"/>
        <dbReference type="EC" id="3.5.1.108"/>
    </reaction>
</comment>
<comment type="cofactor">
    <cofactor evidence="1">
        <name>Zn(2+)</name>
        <dbReference type="ChEBI" id="CHEBI:29105"/>
    </cofactor>
</comment>
<comment type="pathway">
    <text evidence="1">Glycolipid biosynthesis; lipid IV(A) biosynthesis; lipid IV(A) from (3R)-3-hydroxytetradecanoyl-[acyl-carrier-protein] and UDP-N-acetyl-alpha-D-glucosamine: step 2/6.</text>
</comment>
<comment type="similarity">
    <text evidence="1">Belongs to the LpxC family.</text>
</comment>
<feature type="chain" id="PRO_1000205810" description="UDP-3-O-acyl-N-acetylglucosamine deacetylase">
    <location>
        <begin position="1"/>
        <end position="307"/>
    </location>
</feature>
<feature type="active site" description="Proton donor" evidence="1">
    <location>
        <position position="266"/>
    </location>
</feature>
<feature type="binding site" evidence="1">
    <location>
        <position position="79"/>
    </location>
    <ligand>
        <name>Zn(2+)</name>
        <dbReference type="ChEBI" id="CHEBI:29105"/>
    </ligand>
</feature>
<feature type="binding site" evidence="1">
    <location>
        <position position="239"/>
    </location>
    <ligand>
        <name>Zn(2+)</name>
        <dbReference type="ChEBI" id="CHEBI:29105"/>
    </ligand>
</feature>
<feature type="binding site" evidence="1">
    <location>
        <position position="243"/>
    </location>
    <ligand>
        <name>Zn(2+)</name>
        <dbReference type="ChEBI" id="CHEBI:29105"/>
    </ligand>
</feature>
<dbReference type="EC" id="3.5.1.108" evidence="1"/>
<dbReference type="EMBL" id="CP001616">
    <property type="protein sequence ID" value="ACQ92159.1"/>
    <property type="molecule type" value="Genomic_DNA"/>
</dbReference>
<dbReference type="RefSeq" id="WP_012728758.1">
    <property type="nucleotide sequence ID" value="NC_012691.1"/>
</dbReference>
<dbReference type="SMR" id="C4LA30"/>
<dbReference type="STRING" id="595494.Tola_0530"/>
<dbReference type="KEGG" id="tau:Tola_0530"/>
<dbReference type="eggNOG" id="COG0774">
    <property type="taxonomic scope" value="Bacteria"/>
</dbReference>
<dbReference type="HOGENOM" id="CLU_046528_1_0_6"/>
<dbReference type="OrthoDB" id="9802746at2"/>
<dbReference type="UniPathway" id="UPA00359">
    <property type="reaction ID" value="UER00478"/>
</dbReference>
<dbReference type="Proteomes" id="UP000009073">
    <property type="component" value="Chromosome"/>
</dbReference>
<dbReference type="GO" id="GO:0016020">
    <property type="term" value="C:membrane"/>
    <property type="evidence" value="ECO:0007669"/>
    <property type="project" value="GOC"/>
</dbReference>
<dbReference type="GO" id="GO:0046872">
    <property type="term" value="F:metal ion binding"/>
    <property type="evidence" value="ECO:0007669"/>
    <property type="project" value="UniProtKB-KW"/>
</dbReference>
<dbReference type="GO" id="GO:0103117">
    <property type="term" value="F:UDP-3-O-acyl-N-acetylglucosamine deacetylase activity"/>
    <property type="evidence" value="ECO:0007669"/>
    <property type="project" value="UniProtKB-UniRule"/>
</dbReference>
<dbReference type="GO" id="GO:0009245">
    <property type="term" value="P:lipid A biosynthetic process"/>
    <property type="evidence" value="ECO:0007669"/>
    <property type="project" value="UniProtKB-UniRule"/>
</dbReference>
<dbReference type="Gene3D" id="3.30.230.20">
    <property type="entry name" value="lpxc deacetylase, domain 1"/>
    <property type="match status" value="1"/>
</dbReference>
<dbReference type="Gene3D" id="3.30.1700.10">
    <property type="entry name" value="lpxc deacetylase, domain 2"/>
    <property type="match status" value="1"/>
</dbReference>
<dbReference type="HAMAP" id="MF_00388">
    <property type="entry name" value="LpxC"/>
    <property type="match status" value="1"/>
</dbReference>
<dbReference type="InterPro" id="IPR020568">
    <property type="entry name" value="Ribosomal_Su5_D2-typ_SF"/>
</dbReference>
<dbReference type="InterPro" id="IPR004463">
    <property type="entry name" value="UDP-acyl_GlcNac_deAcase"/>
</dbReference>
<dbReference type="InterPro" id="IPR011334">
    <property type="entry name" value="UDP-acyl_GlcNac_deAcase_C"/>
</dbReference>
<dbReference type="InterPro" id="IPR015870">
    <property type="entry name" value="UDP-acyl_N-AcGlcN_deAcase_N"/>
</dbReference>
<dbReference type="NCBIfam" id="TIGR00325">
    <property type="entry name" value="lpxC"/>
    <property type="match status" value="1"/>
</dbReference>
<dbReference type="PANTHER" id="PTHR33694">
    <property type="entry name" value="UDP-3-O-ACYL-N-ACETYLGLUCOSAMINE DEACETYLASE 1, MITOCHONDRIAL-RELATED"/>
    <property type="match status" value="1"/>
</dbReference>
<dbReference type="PANTHER" id="PTHR33694:SF1">
    <property type="entry name" value="UDP-3-O-ACYL-N-ACETYLGLUCOSAMINE DEACETYLASE 1, MITOCHONDRIAL-RELATED"/>
    <property type="match status" value="1"/>
</dbReference>
<dbReference type="Pfam" id="PF03331">
    <property type="entry name" value="LpxC"/>
    <property type="match status" value="1"/>
</dbReference>
<dbReference type="SUPFAM" id="SSF54211">
    <property type="entry name" value="Ribosomal protein S5 domain 2-like"/>
    <property type="match status" value="2"/>
</dbReference>
<reference key="1">
    <citation type="submission" date="2009-05" db="EMBL/GenBank/DDBJ databases">
        <title>Complete sequence of Tolumonas auensis DSM 9187.</title>
        <authorList>
            <consortium name="US DOE Joint Genome Institute"/>
            <person name="Lucas S."/>
            <person name="Copeland A."/>
            <person name="Lapidus A."/>
            <person name="Glavina del Rio T."/>
            <person name="Tice H."/>
            <person name="Bruce D."/>
            <person name="Goodwin L."/>
            <person name="Pitluck S."/>
            <person name="Chertkov O."/>
            <person name="Brettin T."/>
            <person name="Detter J.C."/>
            <person name="Han C."/>
            <person name="Larimer F."/>
            <person name="Land M."/>
            <person name="Hauser L."/>
            <person name="Kyrpides N."/>
            <person name="Mikhailova N."/>
            <person name="Spring S."/>
            <person name="Beller H."/>
        </authorList>
    </citation>
    <scope>NUCLEOTIDE SEQUENCE [LARGE SCALE GENOMIC DNA]</scope>
    <source>
        <strain>DSM 9187 / NBRC 110442 / TA 4</strain>
    </source>
</reference>
<evidence type="ECO:0000255" key="1">
    <source>
        <dbReference type="HAMAP-Rule" id="MF_00388"/>
    </source>
</evidence>
<organism>
    <name type="scientific">Tolumonas auensis (strain DSM 9187 / NBRC 110442 / TA 4)</name>
    <dbReference type="NCBI Taxonomy" id="595494"/>
    <lineage>
        <taxon>Bacteria</taxon>
        <taxon>Pseudomonadati</taxon>
        <taxon>Pseudomonadota</taxon>
        <taxon>Gammaproteobacteria</taxon>
        <taxon>Aeromonadales</taxon>
        <taxon>Aeromonadaceae</taxon>
        <taxon>Tolumonas</taxon>
    </lineage>
</organism>